<dbReference type="EMBL" id="CP000937">
    <property type="protein sequence ID" value="ABZ87910.1"/>
    <property type="molecule type" value="Genomic_DNA"/>
</dbReference>
<dbReference type="SMR" id="B0U080"/>
<dbReference type="KEGG" id="fph:Fphi_1685"/>
<dbReference type="eggNOG" id="COG0238">
    <property type="taxonomic scope" value="Bacteria"/>
</dbReference>
<dbReference type="HOGENOM" id="CLU_148710_2_3_6"/>
<dbReference type="GO" id="GO:0022627">
    <property type="term" value="C:cytosolic small ribosomal subunit"/>
    <property type="evidence" value="ECO:0007669"/>
    <property type="project" value="TreeGrafter"/>
</dbReference>
<dbReference type="GO" id="GO:0070181">
    <property type="term" value="F:small ribosomal subunit rRNA binding"/>
    <property type="evidence" value="ECO:0007669"/>
    <property type="project" value="TreeGrafter"/>
</dbReference>
<dbReference type="GO" id="GO:0003735">
    <property type="term" value="F:structural constituent of ribosome"/>
    <property type="evidence" value="ECO:0007669"/>
    <property type="project" value="InterPro"/>
</dbReference>
<dbReference type="GO" id="GO:0006412">
    <property type="term" value="P:translation"/>
    <property type="evidence" value="ECO:0007669"/>
    <property type="project" value="UniProtKB-UniRule"/>
</dbReference>
<dbReference type="Gene3D" id="4.10.640.10">
    <property type="entry name" value="Ribosomal protein S18"/>
    <property type="match status" value="1"/>
</dbReference>
<dbReference type="HAMAP" id="MF_00270">
    <property type="entry name" value="Ribosomal_bS18"/>
    <property type="match status" value="1"/>
</dbReference>
<dbReference type="InterPro" id="IPR001648">
    <property type="entry name" value="Ribosomal_bS18"/>
</dbReference>
<dbReference type="InterPro" id="IPR018275">
    <property type="entry name" value="Ribosomal_bS18_CS"/>
</dbReference>
<dbReference type="InterPro" id="IPR036870">
    <property type="entry name" value="Ribosomal_bS18_sf"/>
</dbReference>
<dbReference type="NCBIfam" id="TIGR00165">
    <property type="entry name" value="S18"/>
    <property type="match status" value="1"/>
</dbReference>
<dbReference type="PANTHER" id="PTHR13479">
    <property type="entry name" value="30S RIBOSOMAL PROTEIN S18"/>
    <property type="match status" value="1"/>
</dbReference>
<dbReference type="PANTHER" id="PTHR13479:SF40">
    <property type="entry name" value="SMALL RIBOSOMAL SUBUNIT PROTEIN BS18M"/>
    <property type="match status" value="1"/>
</dbReference>
<dbReference type="Pfam" id="PF01084">
    <property type="entry name" value="Ribosomal_S18"/>
    <property type="match status" value="1"/>
</dbReference>
<dbReference type="PRINTS" id="PR00974">
    <property type="entry name" value="RIBOSOMALS18"/>
</dbReference>
<dbReference type="SUPFAM" id="SSF46911">
    <property type="entry name" value="Ribosomal protein S18"/>
    <property type="match status" value="1"/>
</dbReference>
<dbReference type="PROSITE" id="PS00057">
    <property type="entry name" value="RIBOSOMAL_S18"/>
    <property type="match status" value="1"/>
</dbReference>
<name>RS18_FRAP2</name>
<sequence>MSRRKVCRFTVDGVKEIDYKDVNKLKAYITETGKIVPSRVTGTSAKYQRQLATAIKRARFLALLPYCDRHFN</sequence>
<evidence type="ECO:0000255" key="1">
    <source>
        <dbReference type="HAMAP-Rule" id="MF_00270"/>
    </source>
</evidence>
<evidence type="ECO:0000305" key="2"/>
<feature type="chain" id="PRO_0000345469" description="Small ribosomal subunit protein bS18">
    <location>
        <begin position="1"/>
        <end position="72"/>
    </location>
</feature>
<proteinExistence type="inferred from homology"/>
<organism>
    <name type="scientific">Francisella philomiragia subsp. philomiragia (strain ATCC 25017 / CCUG 19701 / FSC 153 / O#319-036)</name>
    <dbReference type="NCBI Taxonomy" id="484022"/>
    <lineage>
        <taxon>Bacteria</taxon>
        <taxon>Pseudomonadati</taxon>
        <taxon>Pseudomonadota</taxon>
        <taxon>Gammaproteobacteria</taxon>
        <taxon>Thiotrichales</taxon>
        <taxon>Francisellaceae</taxon>
        <taxon>Francisella</taxon>
    </lineage>
</organism>
<keyword id="KW-0687">Ribonucleoprotein</keyword>
<keyword id="KW-0689">Ribosomal protein</keyword>
<keyword id="KW-0694">RNA-binding</keyword>
<keyword id="KW-0699">rRNA-binding</keyword>
<gene>
    <name evidence="1" type="primary">rpsR</name>
    <name type="ordered locus">Fphi_1685</name>
</gene>
<reference key="1">
    <citation type="submission" date="2007-12" db="EMBL/GenBank/DDBJ databases">
        <title>Complete sequence of chromosome of Francisella philomiragia subsp. philomiragia ATCC 25017.</title>
        <authorList>
            <consortium name="US DOE Joint Genome Institute"/>
            <person name="Copeland A."/>
            <person name="Lucas S."/>
            <person name="Lapidus A."/>
            <person name="Barry K."/>
            <person name="Detter J.C."/>
            <person name="Glavina del Rio T."/>
            <person name="Hammon N."/>
            <person name="Israni S."/>
            <person name="Dalin E."/>
            <person name="Tice H."/>
            <person name="Pitluck S."/>
            <person name="Chain P."/>
            <person name="Malfatti S."/>
            <person name="Shin M."/>
            <person name="Vergez L."/>
            <person name="Schmutz J."/>
            <person name="Larimer F."/>
            <person name="Land M."/>
            <person name="Hauser L."/>
            <person name="Richardson P."/>
        </authorList>
    </citation>
    <scope>NUCLEOTIDE SEQUENCE [LARGE SCALE GENOMIC DNA]</scope>
    <source>
        <strain>ATCC 25017 / CCUG 19701 / FSC 153 / O#319-036</strain>
    </source>
</reference>
<accession>B0U080</accession>
<comment type="function">
    <text evidence="1">Binds as a heterodimer with protein bS6 to the central domain of the 16S rRNA, where it helps stabilize the platform of the 30S subunit.</text>
</comment>
<comment type="subunit">
    <text evidence="1">Part of the 30S ribosomal subunit. Forms a tight heterodimer with protein bS6.</text>
</comment>
<comment type="similarity">
    <text evidence="1">Belongs to the bacterial ribosomal protein bS18 family.</text>
</comment>
<protein>
    <recommendedName>
        <fullName evidence="1">Small ribosomal subunit protein bS18</fullName>
    </recommendedName>
    <alternativeName>
        <fullName evidence="2">30S ribosomal protein S18</fullName>
    </alternativeName>
</protein>